<protein>
    <recommendedName>
        <fullName evidence="1">Phosphate acyltransferase</fullName>
        <ecNumber evidence="1">2.3.1.274</ecNumber>
    </recommendedName>
    <alternativeName>
        <fullName evidence="1">Acyl-ACP phosphotransacylase</fullName>
    </alternativeName>
    <alternativeName>
        <fullName evidence="1">Acyl-[acyl-carrier-protein]--phosphate acyltransferase</fullName>
    </alternativeName>
    <alternativeName>
        <fullName evidence="1">Phosphate-acyl-ACP acyltransferase</fullName>
    </alternativeName>
</protein>
<feature type="chain" id="PRO_1000116376" description="Phosphate acyltransferase">
    <location>
        <begin position="1"/>
        <end position="356"/>
    </location>
</feature>
<accession>B7MJ77</accession>
<comment type="function">
    <text evidence="1">Catalyzes the reversible formation of acyl-phosphate (acyl-PO(4)) from acyl-[acyl-carrier-protein] (acyl-ACP). This enzyme utilizes acyl-ACP as fatty acyl donor, but not acyl-CoA.</text>
</comment>
<comment type="catalytic activity">
    <reaction evidence="1">
        <text>a fatty acyl-[ACP] + phosphate = an acyl phosphate + holo-[ACP]</text>
        <dbReference type="Rhea" id="RHEA:42292"/>
        <dbReference type="Rhea" id="RHEA-COMP:9685"/>
        <dbReference type="Rhea" id="RHEA-COMP:14125"/>
        <dbReference type="ChEBI" id="CHEBI:43474"/>
        <dbReference type="ChEBI" id="CHEBI:59918"/>
        <dbReference type="ChEBI" id="CHEBI:64479"/>
        <dbReference type="ChEBI" id="CHEBI:138651"/>
        <dbReference type="EC" id="2.3.1.274"/>
    </reaction>
</comment>
<comment type="pathway">
    <text evidence="1">Lipid metabolism; phospholipid metabolism.</text>
</comment>
<comment type="subunit">
    <text evidence="1">Homodimer. Probably interacts with PlsY.</text>
</comment>
<comment type="subcellular location">
    <subcellularLocation>
        <location evidence="1">Cytoplasm</location>
    </subcellularLocation>
    <text evidence="1">Associated with the membrane possibly through PlsY.</text>
</comment>
<comment type="similarity">
    <text evidence="1">Belongs to the PlsX family.</text>
</comment>
<proteinExistence type="inferred from homology"/>
<sequence>MTRLTLALDVMGGDFGPSVTVPAALQALNSNSQLTLLLVGNPDAITPLLAKADFEQRSRLQIIPAQSVIASDARPSQAIRASRGSSMRVALELVKEGRAQACVSAGNTGALMGLAKLLLKPLEGIERPALVTVLPHQQKGKTVVLDLGANVDCDSTMLVQFAIMGSVLAEEVVEIPNPRVALLNIGEEEVKGLDSIRDASAVLKTIPSINYIGYLEANELLTGKTDVLVCDGFTGNVTLKTMEGVVRMFLSLLKSQGEGKKRSWWLLLLKRWLQKSLTRRFSHLNPDQYNGACLLGLRGTVIKSHGAANQRAFAVAIEQAVQAVQRQVPQRIAARLESVYPAGFELLDGGKSGTLR</sequence>
<gene>
    <name evidence="1" type="primary">plsX</name>
    <name type="ordered locus">ECS88_1104</name>
</gene>
<keyword id="KW-0963">Cytoplasm</keyword>
<keyword id="KW-0444">Lipid biosynthesis</keyword>
<keyword id="KW-0443">Lipid metabolism</keyword>
<keyword id="KW-0594">Phospholipid biosynthesis</keyword>
<keyword id="KW-1208">Phospholipid metabolism</keyword>
<keyword id="KW-1185">Reference proteome</keyword>
<keyword id="KW-0808">Transferase</keyword>
<organism>
    <name type="scientific">Escherichia coli O45:K1 (strain S88 / ExPEC)</name>
    <dbReference type="NCBI Taxonomy" id="585035"/>
    <lineage>
        <taxon>Bacteria</taxon>
        <taxon>Pseudomonadati</taxon>
        <taxon>Pseudomonadota</taxon>
        <taxon>Gammaproteobacteria</taxon>
        <taxon>Enterobacterales</taxon>
        <taxon>Enterobacteriaceae</taxon>
        <taxon>Escherichia</taxon>
    </lineage>
</organism>
<dbReference type="EC" id="2.3.1.274" evidence="1"/>
<dbReference type="EMBL" id="CU928161">
    <property type="protein sequence ID" value="CAR02430.1"/>
    <property type="molecule type" value="Genomic_DNA"/>
</dbReference>
<dbReference type="RefSeq" id="WP_000197578.1">
    <property type="nucleotide sequence ID" value="NC_011742.1"/>
</dbReference>
<dbReference type="SMR" id="B7MJ77"/>
<dbReference type="GeneID" id="93776318"/>
<dbReference type="KEGG" id="ecz:ECS88_1104"/>
<dbReference type="HOGENOM" id="CLU_039379_1_0_6"/>
<dbReference type="UniPathway" id="UPA00085"/>
<dbReference type="Proteomes" id="UP000000747">
    <property type="component" value="Chromosome"/>
</dbReference>
<dbReference type="GO" id="GO:0005737">
    <property type="term" value="C:cytoplasm"/>
    <property type="evidence" value="ECO:0007669"/>
    <property type="project" value="UniProtKB-SubCell"/>
</dbReference>
<dbReference type="GO" id="GO:0043811">
    <property type="term" value="F:phosphate:acyl-[acyl carrier protein] acyltransferase activity"/>
    <property type="evidence" value="ECO:0007669"/>
    <property type="project" value="UniProtKB-UniRule"/>
</dbReference>
<dbReference type="GO" id="GO:0006633">
    <property type="term" value="P:fatty acid biosynthetic process"/>
    <property type="evidence" value="ECO:0007669"/>
    <property type="project" value="UniProtKB-UniRule"/>
</dbReference>
<dbReference type="GO" id="GO:0008654">
    <property type="term" value="P:phospholipid biosynthetic process"/>
    <property type="evidence" value="ECO:0007669"/>
    <property type="project" value="UniProtKB-KW"/>
</dbReference>
<dbReference type="FunFam" id="3.40.718.10:FF:000008">
    <property type="entry name" value="Phosphate acyltransferase"/>
    <property type="match status" value="1"/>
</dbReference>
<dbReference type="Gene3D" id="3.40.718.10">
    <property type="entry name" value="Isopropylmalate Dehydrogenase"/>
    <property type="match status" value="1"/>
</dbReference>
<dbReference type="HAMAP" id="MF_00019">
    <property type="entry name" value="PlsX"/>
    <property type="match status" value="1"/>
</dbReference>
<dbReference type="InterPro" id="IPR003664">
    <property type="entry name" value="FA_synthesis"/>
</dbReference>
<dbReference type="InterPro" id="IPR012281">
    <property type="entry name" value="Phospholipid_synth_PlsX-like"/>
</dbReference>
<dbReference type="NCBIfam" id="TIGR00182">
    <property type="entry name" value="plsX"/>
    <property type="match status" value="1"/>
</dbReference>
<dbReference type="PANTHER" id="PTHR30100">
    <property type="entry name" value="FATTY ACID/PHOSPHOLIPID SYNTHESIS PROTEIN PLSX"/>
    <property type="match status" value="1"/>
</dbReference>
<dbReference type="PANTHER" id="PTHR30100:SF1">
    <property type="entry name" value="PHOSPHATE ACYLTRANSFERASE"/>
    <property type="match status" value="1"/>
</dbReference>
<dbReference type="Pfam" id="PF02504">
    <property type="entry name" value="FA_synthesis"/>
    <property type="match status" value="1"/>
</dbReference>
<dbReference type="PIRSF" id="PIRSF002465">
    <property type="entry name" value="Phsphlp_syn_PlsX"/>
    <property type="match status" value="1"/>
</dbReference>
<dbReference type="SUPFAM" id="SSF53659">
    <property type="entry name" value="Isocitrate/Isopropylmalate dehydrogenase-like"/>
    <property type="match status" value="1"/>
</dbReference>
<name>PLSX_ECO45</name>
<evidence type="ECO:0000255" key="1">
    <source>
        <dbReference type="HAMAP-Rule" id="MF_00019"/>
    </source>
</evidence>
<reference key="1">
    <citation type="journal article" date="2009" name="PLoS Genet.">
        <title>Organised genome dynamics in the Escherichia coli species results in highly diverse adaptive paths.</title>
        <authorList>
            <person name="Touchon M."/>
            <person name="Hoede C."/>
            <person name="Tenaillon O."/>
            <person name="Barbe V."/>
            <person name="Baeriswyl S."/>
            <person name="Bidet P."/>
            <person name="Bingen E."/>
            <person name="Bonacorsi S."/>
            <person name="Bouchier C."/>
            <person name="Bouvet O."/>
            <person name="Calteau A."/>
            <person name="Chiapello H."/>
            <person name="Clermont O."/>
            <person name="Cruveiller S."/>
            <person name="Danchin A."/>
            <person name="Diard M."/>
            <person name="Dossat C."/>
            <person name="Karoui M.E."/>
            <person name="Frapy E."/>
            <person name="Garry L."/>
            <person name="Ghigo J.M."/>
            <person name="Gilles A.M."/>
            <person name="Johnson J."/>
            <person name="Le Bouguenec C."/>
            <person name="Lescat M."/>
            <person name="Mangenot S."/>
            <person name="Martinez-Jehanne V."/>
            <person name="Matic I."/>
            <person name="Nassif X."/>
            <person name="Oztas S."/>
            <person name="Petit M.A."/>
            <person name="Pichon C."/>
            <person name="Rouy Z."/>
            <person name="Ruf C.S."/>
            <person name="Schneider D."/>
            <person name="Tourret J."/>
            <person name="Vacherie B."/>
            <person name="Vallenet D."/>
            <person name="Medigue C."/>
            <person name="Rocha E.P.C."/>
            <person name="Denamur E."/>
        </authorList>
    </citation>
    <scope>NUCLEOTIDE SEQUENCE [LARGE SCALE GENOMIC DNA]</scope>
    <source>
        <strain>S88 / ExPEC</strain>
    </source>
</reference>